<protein>
    <recommendedName>
        <fullName evidence="1">4-hydroxy-3-methylbut-2-enyl diphosphate reductase</fullName>
        <shortName evidence="1">HMBPP reductase</shortName>
        <ecNumber evidence="1">1.17.7.4</ecNumber>
    </recommendedName>
</protein>
<sequence>MKVILAKRAGFCFGVKRATQMAFEAAGKDQKTFTLGPIIHSPQVVNKLEEMGVGVVKDLSGVSNGTVIIRSHGVLASEMDEAHQKQLEVVDATCPFVKKAQEHVQYLSEAGYDVLVVGDADHPEVQGIVSYGKEKVYVVASGDQVKQLPKMGKMGVVAQTTQSFDNLKSVVTECLRRGGEVRVYNTICDATAVRQQEATELAQQVDCMIVIGGFNSANTRRLAEICTEIQPRTYHIETAAEIDCSWFQGVDTVGVTAGASTPKWIIDEVMNRLDQVNNSH</sequence>
<feature type="chain" id="PRO_1000098952" description="4-hydroxy-3-methylbut-2-enyl diphosphate reductase">
    <location>
        <begin position="1"/>
        <end position="280"/>
    </location>
</feature>
<feature type="active site" description="Proton donor" evidence="1">
    <location>
        <position position="124"/>
    </location>
</feature>
<feature type="binding site" evidence="1">
    <location>
        <position position="12"/>
    </location>
    <ligand>
        <name>[4Fe-4S] cluster</name>
        <dbReference type="ChEBI" id="CHEBI:49883"/>
    </ligand>
</feature>
<feature type="binding site" evidence="1">
    <location>
        <position position="40"/>
    </location>
    <ligand>
        <name>(2E)-4-hydroxy-3-methylbut-2-enyl diphosphate</name>
        <dbReference type="ChEBI" id="CHEBI:128753"/>
    </ligand>
</feature>
<feature type="binding site" evidence="1">
    <location>
        <position position="40"/>
    </location>
    <ligand>
        <name>dimethylallyl diphosphate</name>
        <dbReference type="ChEBI" id="CHEBI:57623"/>
    </ligand>
</feature>
<feature type="binding site" evidence="1">
    <location>
        <position position="40"/>
    </location>
    <ligand>
        <name>isopentenyl diphosphate</name>
        <dbReference type="ChEBI" id="CHEBI:128769"/>
    </ligand>
</feature>
<feature type="binding site" evidence="1">
    <location>
        <position position="72"/>
    </location>
    <ligand>
        <name>(2E)-4-hydroxy-3-methylbut-2-enyl diphosphate</name>
        <dbReference type="ChEBI" id="CHEBI:128753"/>
    </ligand>
</feature>
<feature type="binding site" evidence="1">
    <location>
        <position position="72"/>
    </location>
    <ligand>
        <name>dimethylallyl diphosphate</name>
        <dbReference type="ChEBI" id="CHEBI:57623"/>
    </ligand>
</feature>
<feature type="binding site" evidence="1">
    <location>
        <position position="72"/>
    </location>
    <ligand>
        <name>isopentenyl diphosphate</name>
        <dbReference type="ChEBI" id="CHEBI:128769"/>
    </ligand>
</feature>
<feature type="binding site" evidence="1">
    <location>
        <position position="94"/>
    </location>
    <ligand>
        <name>[4Fe-4S] cluster</name>
        <dbReference type="ChEBI" id="CHEBI:49883"/>
    </ligand>
</feature>
<feature type="binding site" evidence="1">
    <location>
        <position position="122"/>
    </location>
    <ligand>
        <name>(2E)-4-hydroxy-3-methylbut-2-enyl diphosphate</name>
        <dbReference type="ChEBI" id="CHEBI:128753"/>
    </ligand>
</feature>
<feature type="binding site" evidence="1">
    <location>
        <position position="122"/>
    </location>
    <ligand>
        <name>dimethylallyl diphosphate</name>
        <dbReference type="ChEBI" id="CHEBI:57623"/>
    </ligand>
</feature>
<feature type="binding site" evidence="1">
    <location>
        <position position="122"/>
    </location>
    <ligand>
        <name>isopentenyl diphosphate</name>
        <dbReference type="ChEBI" id="CHEBI:128769"/>
    </ligand>
</feature>
<feature type="binding site" evidence="1">
    <location>
        <position position="160"/>
    </location>
    <ligand>
        <name>(2E)-4-hydroxy-3-methylbut-2-enyl diphosphate</name>
        <dbReference type="ChEBI" id="CHEBI:128753"/>
    </ligand>
</feature>
<feature type="binding site" evidence="1">
    <location>
        <position position="188"/>
    </location>
    <ligand>
        <name>[4Fe-4S] cluster</name>
        <dbReference type="ChEBI" id="CHEBI:49883"/>
    </ligand>
</feature>
<feature type="binding site" evidence="1">
    <location>
        <position position="216"/>
    </location>
    <ligand>
        <name>(2E)-4-hydroxy-3-methylbut-2-enyl diphosphate</name>
        <dbReference type="ChEBI" id="CHEBI:128753"/>
    </ligand>
</feature>
<feature type="binding site" evidence="1">
    <location>
        <position position="216"/>
    </location>
    <ligand>
        <name>dimethylallyl diphosphate</name>
        <dbReference type="ChEBI" id="CHEBI:57623"/>
    </ligand>
</feature>
<feature type="binding site" evidence="1">
    <location>
        <position position="216"/>
    </location>
    <ligand>
        <name>isopentenyl diphosphate</name>
        <dbReference type="ChEBI" id="CHEBI:128769"/>
    </ligand>
</feature>
<feature type="binding site" evidence="1">
    <location>
        <position position="218"/>
    </location>
    <ligand>
        <name>(2E)-4-hydroxy-3-methylbut-2-enyl diphosphate</name>
        <dbReference type="ChEBI" id="CHEBI:128753"/>
    </ligand>
</feature>
<feature type="binding site" evidence="1">
    <location>
        <position position="218"/>
    </location>
    <ligand>
        <name>dimethylallyl diphosphate</name>
        <dbReference type="ChEBI" id="CHEBI:57623"/>
    </ligand>
</feature>
<feature type="binding site" evidence="1">
    <location>
        <position position="218"/>
    </location>
    <ligand>
        <name>isopentenyl diphosphate</name>
        <dbReference type="ChEBI" id="CHEBI:128769"/>
    </ligand>
</feature>
<feature type="binding site" evidence="1">
    <location>
        <position position="260"/>
    </location>
    <ligand>
        <name>(2E)-4-hydroxy-3-methylbut-2-enyl diphosphate</name>
        <dbReference type="ChEBI" id="CHEBI:128753"/>
    </ligand>
</feature>
<feature type="binding site" evidence="1">
    <location>
        <position position="260"/>
    </location>
    <ligand>
        <name>dimethylallyl diphosphate</name>
        <dbReference type="ChEBI" id="CHEBI:57623"/>
    </ligand>
</feature>
<feature type="binding site" evidence="1">
    <location>
        <position position="260"/>
    </location>
    <ligand>
        <name>isopentenyl diphosphate</name>
        <dbReference type="ChEBI" id="CHEBI:128769"/>
    </ligand>
</feature>
<evidence type="ECO:0000255" key="1">
    <source>
        <dbReference type="HAMAP-Rule" id="MF_00191"/>
    </source>
</evidence>
<gene>
    <name evidence="1" type="primary">ispH</name>
    <name type="ordered locus">Glov_2146</name>
</gene>
<name>ISPH_TRIL1</name>
<reference key="1">
    <citation type="submission" date="2008-05" db="EMBL/GenBank/DDBJ databases">
        <title>Complete sequence of chromosome of Geobacter lovleyi SZ.</title>
        <authorList>
            <consortium name="US DOE Joint Genome Institute"/>
            <person name="Lucas S."/>
            <person name="Copeland A."/>
            <person name="Lapidus A."/>
            <person name="Glavina del Rio T."/>
            <person name="Dalin E."/>
            <person name="Tice H."/>
            <person name="Bruce D."/>
            <person name="Goodwin L."/>
            <person name="Pitluck S."/>
            <person name="Chertkov O."/>
            <person name="Meincke L."/>
            <person name="Brettin T."/>
            <person name="Detter J.C."/>
            <person name="Han C."/>
            <person name="Tapia R."/>
            <person name="Kuske C.R."/>
            <person name="Schmutz J."/>
            <person name="Larimer F."/>
            <person name="Land M."/>
            <person name="Hauser L."/>
            <person name="Kyrpides N."/>
            <person name="Mikhailova N."/>
            <person name="Sung Y."/>
            <person name="Fletcher K.E."/>
            <person name="Ritalahti K.M."/>
            <person name="Loeffler F.E."/>
            <person name="Richardson P."/>
        </authorList>
    </citation>
    <scope>NUCLEOTIDE SEQUENCE [LARGE SCALE GENOMIC DNA]</scope>
    <source>
        <strain>ATCC BAA-1151 / DSM 17278 / SZ</strain>
    </source>
</reference>
<comment type="function">
    <text evidence="1">Catalyzes the conversion of 1-hydroxy-2-methyl-2-(E)-butenyl 4-diphosphate (HMBPP) into a mixture of isopentenyl diphosphate (IPP) and dimethylallyl diphosphate (DMAPP). Acts in the terminal step of the DOXP/MEP pathway for isoprenoid precursor biosynthesis.</text>
</comment>
<comment type="catalytic activity">
    <reaction evidence="1">
        <text>isopentenyl diphosphate + 2 oxidized [2Fe-2S]-[ferredoxin] + H2O = (2E)-4-hydroxy-3-methylbut-2-enyl diphosphate + 2 reduced [2Fe-2S]-[ferredoxin] + 2 H(+)</text>
        <dbReference type="Rhea" id="RHEA:24488"/>
        <dbReference type="Rhea" id="RHEA-COMP:10000"/>
        <dbReference type="Rhea" id="RHEA-COMP:10001"/>
        <dbReference type="ChEBI" id="CHEBI:15377"/>
        <dbReference type="ChEBI" id="CHEBI:15378"/>
        <dbReference type="ChEBI" id="CHEBI:33737"/>
        <dbReference type="ChEBI" id="CHEBI:33738"/>
        <dbReference type="ChEBI" id="CHEBI:128753"/>
        <dbReference type="ChEBI" id="CHEBI:128769"/>
        <dbReference type="EC" id="1.17.7.4"/>
    </reaction>
</comment>
<comment type="catalytic activity">
    <reaction evidence="1">
        <text>dimethylallyl diphosphate + 2 oxidized [2Fe-2S]-[ferredoxin] + H2O = (2E)-4-hydroxy-3-methylbut-2-enyl diphosphate + 2 reduced [2Fe-2S]-[ferredoxin] + 2 H(+)</text>
        <dbReference type="Rhea" id="RHEA:24825"/>
        <dbReference type="Rhea" id="RHEA-COMP:10000"/>
        <dbReference type="Rhea" id="RHEA-COMP:10001"/>
        <dbReference type="ChEBI" id="CHEBI:15377"/>
        <dbReference type="ChEBI" id="CHEBI:15378"/>
        <dbReference type="ChEBI" id="CHEBI:33737"/>
        <dbReference type="ChEBI" id="CHEBI:33738"/>
        <dbReference type="ChEBI" id="CHEBI:57623"/>
        <dbReference type="ChEBI" id="CHEBI:128753"/>
        <dbReference type="EC" id="1.17.7.4"/>
    </reaction>
</comment>
<comment type="cofactor">
    <cofactor evidence="1">
        <name>[4Fe-4S] cluster</name>
        <dbReference type="ChEBI" id="CHEBI:49883"/>
    </cofactor>
    <text evidence="1">Binds 1 [4Fe-4S] cluster per subunit.</text>
</comment>
<comment type="pathway">
    <text evidence="1">Isoprenoid biosynthesis; dimethylallyl diphosphate biosynthesis; dimethylallyl diphosphate from (2E)-4-hydroxy-3-methylbutenyl diphosphate: step 1/1.</text>
</comment>
<comment type="pathway">
    <text evidence="1">Isoprenoid biosynthesis; isopentenyl diphosphate biosynthesis via DXP pathway; isopentenyl diphosphate from 1-deoxy-D-xylulose 5-phosphate: step 6/6.</text>
</comment>
<comment type="similarity">
    <text evidence="1">Belongs to the IspH family.</text>
</comment>
<accession>B3E441</accession>
<organism>
    <name type="scientific">Trichlorobacter lovleyi (strain ATCC BAA-1151 / DSM 17278 / SZ)</name>
    <name type="common">Geobacter lovleyi</name>
    <dbReference type="NCBI Taxonomy" id="398767"/>
    <lineage>
        <taxon>Bacteria</taxon>
        <taxon>Pseudomonadati</taxon>
        <taxon>Thermodesulfobacteriota</taxon>
        <taxon>Desulfuromonadia</taxon>
        <taxon>Geobacterales</taxon>
        <taxon>Geobacteraceae</taxon>
        <taxon>Trichlorobacter</taxon>
    </lineage>
</organism>
<keyword id="KW-0004">4Fe-4S</keyword>
<keyword id="KW-0408">Iron</keyword>
<keyword id="KW-0411">Iron-sulfur</keyword>
<keyword id="KW-0414">Isoprene biosynthesis</keyword>
<keyword id="KW-0479">Metal-binding</keyword>
<keyword id="KW-0560">Oxidoreductase</keyword>
<keyword id="KW-1185">Reference proteome</keyword>
<dbReference type="EC" id="1.17.7.4" evidence="1"/>
<dbReference type="EMBL" id="CP001089">
    <property type="protein sequence ID" value="ACD95862.1"/>
    <property type="molecule type" value="Genomic_DNA"/>
</dbReference>
<dbReference type="RefSeq" id="WP_012470200.1">
    <property type="nucleotide sequence ID" value="NC_010814.1"/>
</dbReference>
<dbReference type="SMR" id="B3E441"/>
<dbReference type="STRING" id="398767.Glov_2146"/>
<dbReference type="KEGG" id="glo:Glov_2146"/>
<dbReference type="eggNOG" id="COG0761">
    <property type="taxonomic scope" value="Bacteria"/>
</dbReference>
<dbReference type="HOGENOM" id="CLU_027486_0_1_7"/>
<dbReference type="OrthoDB" id="9804068at2"/>
<dbReference type="UniPathway" id="UPA00056">
    <property type="reaction ID" value="UER00097"/>
</dbReference>
<dbReference type="UniPathway" id="UPA00059">
    <property type="reaction ID" value="UER00105"/>
</dbReference>
<dbReference type="Proteomes" id="UP000002420">
    <property type="component" value="Chromosome"/>
</dbReference>
<dbReference type="GO" id="GO:0051539">
    <property type="term" value="F:4 iron, 4 sulfur cluster binding"/>
    <property type="evidence" value="ECO:0007669"/>
    <property type="project" value="UniProtKB-UniRule"/>
</dbReference>
<dbReference type="GO" id="GO:0051745">
    <property type="term" value="F:4-hydroxy-3-methylbut-2-enyl diphosphate reductase activity"/>
    <property type="evidence" value="ECO:0007669"/>
    <property type="project" value="UniProtKB-UniRule"/>
</dbReference>
<dbReference type="GO" id="GO:0046872">
    <property type="term" value="F:metal ion binding"/>
    <property type="evidence" value="ECO:0007669"/>
    <property type="project" value="UniProtKB-KW"/>
</dbReference>
<dbReference type="GO" id="GO:0050992">
    <property type="term" value="P:dimethylallyl diphosphate biosynthetic process"/>
    <property type="evidence" value="ECO:0007669"/>
    <property type="project" value="UniProtKB-UniRule"/>
</dbReference>
<dbReference type="GO" id="GO:0019288">
    <property type="term" value="P:isopentenyl diphosphate biosynthetic process, methylerythritol 4-phosphate pathway"/>
    <property type="evidence" value="ECO:0007669"/>
    <property type="project" value="UniProtKB-UniRule"/>
</dbReference>
<dbReference type="GO" id="GO:0016114">
    <property type="term" value="P:terpenoid biosynthetic process"/>
    <property type="evidence" value="ECO:0007669"/>
    <property type="project" value="UniProtKB-UniRule"/>
</dbReference>
<dbReference type="CDD" id="cd13944">
    <property type="entry name" value="lytB_ispH"/>
    <property type="match status" value="1"/>
</dbReference>
<dbReference type="Gene3D" id="3.40.50.11270">
    <property type="match status" value="1"/>
</dbReference>
<dbReference type="Gene3D" id="3.40.1010.20">
    <property type="entry name" value="4-hydroxy-3-methylbut-2-enyl diphosphate reductase, catalytic domain"/>
    <property type="match status" value="2"/>
</dbReference>
<dbReference type="HAMAP" id="MF_00191">
    <property type="entry name" value="IspH"/>
    <property type="match status" value="1"/>
</dbReference>
<dbReference type="InterPro" id="IPR003451">
    <property type="entry name" value="LytB/IspH"/>
</dbReference>
<dbReference type="NCBIfam" id="TIGR00216">
    <property type="entry name" value="ispH_lytB"/>
    <property type="match status" value="1"/>
</dbReference>
<dbReference type="NCBIfam" id="NF002187">
    <property type="entry name" value="PRK01045.1-1"/>
    <property type="match status" value="1"/>
</dbReference>
<dbReference type="PANTHER" id="PTHR30426">
    <property type="entry name" value="4-HYDROXY-3-METHYLBUT-2-ENYL DIPHOSPHATE REDUCTASE"/>
    <property type="match status" value="1"/>
</dbReference>
<dbReference type="PANTHER" id="PTHR30426:SF0">
    <property type="entry name" value="4-HYDROXY-3-METHYLBUT-2-ENYL DIPHOSPHATE REDUCTASE"/>
    <property type="match status" value="1"/>
</dbReference>
<dbReference type="Pfam" id="PF02401">
    <property type="entry name" value="LYTB"/>
    <property type="match status" value="1"/>
</dbReference>
<proteinExistence type="inferred from homology"/>